<comment type="function">
    <text evidence="1">Plays a role in the regulation of phosphate uptake (By similarity). Encoded together with proteins of the phosphate-specific transport (Pst) system in the polycistronic pstSCAB-phoU operon.</text>
</comment>
<comment type="subunit">
    <text evidence="2">Homodimer.</text>
</comment>
<comment type="subcellular location">
    <subcellularLocation>
        <location evidence="3">Cytoplasm</location>
    </subcellularLocation>
</comment>
<comment type="induction">
    <text evidence="5">By phosphate limitation.</text>
</comment>
<comment type="similarity">
    <text evidence="4">Belongs to the PhoU family.</text>
</comment>
<dbReference type="EMBL" id="AE001437">
    <property type="protein sequence ID" value="AAK79675.1"/>
    <property type="molecule type" value="Genomic_DNA"/>
</dbReference>
<dbReference type="PIR" id="H97110">
    <property type="entry name" value="H97110"/>
</dbReference>
<dbReference type="RefSeq" id="NP_348335.1">
    <property type="nucleotide sequence ID" value="NC_003030.1"/>
</dbReference>
<dbReference type="RefSeq" id="WP_010965016.1">
    <property type="nucleotide sequence ID" value="NC_003030.1"/>
</dbReference>
<dbReference type="SMR" id="Q97ID9"/>
<dbReference type="STRING" id="272562.CA_C1709"/>
<dbReference type="GeneID" id="44998204"/>
<dbReference type="KEGG" id="cac:CA_C1709"/>
<dbReference type="PATRIC" id="fig|272562.8.peg.1911"/>
<dbReference type="eggNOG" id="COG0704">
    <property type="taxonomic scope" value="Bacteria"/>
</dbReference>
<dbReference type="HOGENOM" id="CLU_078518_3_0_9"/>
<dbReference type="OrthoDB" id="9814256at2"/>
<dbReference type="Proteomes" id="UP000000814">
    <property type="component" value="Chromosome"/>
</dbReference>
<dbReference type="GO" id="GO:0005737">
    <property type="term" value="C:cytoplasm"/>
    <property type="evidence" value="ECO:0000250"/>
    <property type="project" value="UniProtKB"/>
</dbReference>
<dbReference type="GO" id="GO:0042803">
    <property type="term" value="F:protein homodimerization activity"/>
    <property type="evidence" value="ECO:0000250"/>
    <property type="project" value="UniProtKB"/>
</dbReference>
<dbReference type="GO" id="GO:0030643">
    <property type="term" value="P:intracellular phosphate ion homeostasis"/>
    <property type="evidence" value="ECO:0007669"/>
    <property type="project" value="InterPro"/>
</dbReference>
<dbReference type="GO" id="GO:0045936">
    <property type="term" value="P:negative regulation of phosphate metabolic process"/>
    <property type="evidence" value="ECO:0000250"/>
    <property type="project" value="UniProtKB"/>
</dbReference>
<dbReference type="GO" id="GO:2000186">
    <property type="term" value="P:negative regulation of phosphate transmembrane transport"/>
    <property type="evidence" value="ECO:0000250"/>
    <property type="project" value="UniProtKB"/>
</dbReference>
<dbReference type="GO" id="GO:0006817">
    <property type="term" value="P:phosphate ion transport"/>
    <property type="evidence" value="ECO:0007669"/>
    <property type="project" value="UniProtKB-KW"/>
</dbReference>
<dbReference type="GO" id="GO:0019220">
    <property type="term" value="P:regulation of phosphate metabolic process"/>
    <property type="evidence" value="ECO:0000317"/>
    <property type="project" value="UniProtKB"/>
</dbReference>
<dbReference type="FunFam" id="1.20.58.220:FF:000004">
    <property type="entry name" value="Phosphate-specific transport system accessory protein PhoU"/>
    <property type="match status" value="1"/>
</dbReference>
<dbReference type="Gene3D" id="1.20.58.220">
    <property type="entry name" value="Phosphate transport system protein phou homolog 2, domain 2"/>
    <property type="match status" value="1"/>
</dbReference>
<dbReference type="InterPro" id="IPR028366">
    <property type="entry name" value="P_transport_PhoU"/>
</dbReference>
<dbReference type="InterPro" id="IPR038078">
    <property type="entry name" value="PhoU-like_sf"/>
</dbReference>
<dbReference type="InterPro" id="IPR026022">
    <property type="entry name" value="PhoU_dom"/>
</dbReference>
<dbReference type="NCBIfam" id="TIGR02135">
    <property type="entry name" value="phoU_full"/>
    <property type="match status" value="1"/>
</dbReference>
<dbReference type="PANTHER" id="PTHR42930">
    <property type="entry name" value="PHOSPHATE-SPECIFIC TRANSPORT SYSTEM ACCESSORY PROTEIN PHOU"/>
    <property type="match status" value="1"/>
</dbReference>
<dbReference type="PANTHER" id="PTHR42930:SF3">
    <property type="entry name" value="PHOSPHATE-SPECIFIC TRANSPORT SYSTEM ACCESSORY PROTEIN PHOU"/>
    <property type="match status" value="1"/>
</dbReference>
<dbReference type="Pfam" id="PF01895">
    <property type="entry name" value="PhoU"/>
    <property type="match status" value="2"/>
</dbReference>
<dbReference type="PIRSF" id="PIRSF003107">
    <property type="entry name" value="PhoU"/>
    <property type="match status" value="1"/>
</dbReference>
<dbReference type="SUPFAM" id="SSF109755">
    <property type="entry name" value="PhoU-like"/>
    <property type="match status" value="1"/>
</dbReference>
<accession>Q97ID9</accession>
<gene>
    <name evidence="7" type="primary">phoU</name>
    <name type="ordered locus">CA_C1709</name>
</gene>
<evidence type="ECO:0000250" key="1"/>
<evidence type="ECO:0000250" key="2">
    <source>
        <dbReference type="UniProtKB" id="O67053"/>
    </source>
</evidence>
<evidence type="ECO:0000250" key="3">
    <source>
        <dbReference type="UniProtKB" id="P0A9K7"/>
    </source>
</evidence>
<evidence type="ECO:0000255" key="4"/>
<evidence type="ECO:0000269" key="5">
    <source>
    </source>
</evidence>
<evidence type="ECO:0000305" key="6"/>
<evidence type="ECO:0000312" key="7">
    <source>
        <dbReference type="EMBL" id="AAK79675.1"/>
    </source>
</evidence>
<feature type="chain" id="PRO_0000420871" description="Phosphate-specific transport system accessory protein PhoU homolog">
    <location>
        <begin position="1"/>
        <end position="219"/>
    </location>
</feature>
<reference evidence="7" key="1">
    <citation type="journal article" date="2001" name="J. Bacteriol.">
        <title>Genome sequence and comparative analysis of the solvent-producing bacterium Clostridium acetobutylicum.</title>
        <authorList>
            <person name="Noelling J."/>
            <person name="Breton G."/>
            <person name="Omelchenko M.V."/>
            <person name="Makarova K.S."/>
            <person name="Zeng Q."/>
            <person name="Gibson R."/>
            <person name="Lee H.M."/>
            <person name="Dubois J."/>
            <person name="Qiu D."/>
            <person name="Hitti J."/>
            <person name="Wolf Y.I."/>
            <person name="Tatusov R.L."/>
            <person name="Sabathe F."/>
            <person name="Doucette-Stamm L.A."/>
            <person name="Soucaille P."/>
            <person name="Daly M.J."/>
            <person name="Bennett G.N."/>
            <person name="Koonin E.V."/>
            <person name="Smith D.R."/>
        </authorList>
    </citation>
    <scope>NUCLEOTIDE SEQUENCE [LARGE SCALE GENOMIC DNA]</scope>
    <source>
        <strain>ATCC 824 / DSM 792 / JCM 1419 / IAM 19013 / LMG 5710 / NBRC 13948 / NRRL B-527 / VKM B-1787 / 2291 / W</strain>
    </source>
</reference>
<reference evidence="6" key="2">
    <citation type="journal article" date="2006" name="J. Bacteriol.">
        <title>Transcription of the pst operon of Clostridium acetobutylicum is dependent on phosphate concentration and pH.</title>
        <authorList>
            <person name="Fischer R.J."/>
            <person name="Oehmcke S."/>
            <person name="Meyer U."/>
            <person name="Mix M."/>
            <person name="Schwarz K."/>
            <person name="Fiedler T."/>
            <person name="Bahl H."/>
        </authorList>
    </citation>
    <scope>OPERON STRUCTURE</scope>
    <scope>INDUCTION</scope>
    <source>
        <strain evidence="5">ATCC 824 / DSM 792 / JCM 1419 / IAM 19013 / LMG 5710 / NBRC 13948 / NRRL B-527 / VKM B-1787 / 2291 / W</strain>
    </source>
</reference>
<organism>
    <name type="scientific">Clostridium acetobutylicum (strain ATCC 824 / DSM 792 / JCM 1419 / IAM 19013 / LMG 5710 / NBRC 13948 / NRRL B-527 / VKM B-1787 / 2291 / W)</name>
    <dbReference type="NCBI Taxonomy" id="272562"/>
    <lineage>
        <taxon>Bacteria</taxon>
        <taxon>Bacillati</taxon>
        <taxon>Bacillota</taxon>
        <taxon>Clostridia</taxon>
        <taxon>Eubacteriales</taxon>
        <taxon>Clostridiaceae</taxon>
        <taxon>Clostridium</taxon>
    </lineage>
</organism>
<sequence length="219" mass="25566">MTRKIFESDLEELHSELLRMGSMAEKQIYDCMEALEKQDENMAEVIIKKDDIIDDMQKEIENKVIRLIAMQQPIVAEDLRNIFTTVKIVTDLERLGDHAVDIAKAIKRLNGEKHHDIVKEIWNMGNKVKSMIKDSLDAYVERNLDKAYEVCKRDDDVDSLYKRIFNELLNIMSEDKSKVNQLTQFLFVCKYLERIGDRTTNVCESTIYLITGKQVDLND</sequence>
<keyword id="KW-0963">Cytoplasm</keyword>
<keyword id="KW-0592">Phosphate transport</keyword>
<keyword id="KW-1185">Reference proteome</keyword>
<keyword id="KW-0813">Transport</keyword>
<protein>
    <recommendedName>
        <fullName evidence="3">Phosphate-specific transport system accessory protein PhoU homolog</fullName>
        <shortName evidence="3">Pst system accessory protein PhoU homolog</shortName>
    </recommendedName>
    <alternativeName>
        <fullName evidence="7">Phosphate uptake regulator</fullName>
    </alternativeName>
</protein>
<proteinExistence type="evidence at transcript level"/>
<name>PHOU_CLOAB</name>